<proteinExistence type="inferred from homology"/>
<reference key="1">
    <citation type="journal article" date="2010" name="PLoS ONE">
        <title>The complete multipartite genome sequence of Cupriavidus necator JMP134, a versatile pollutant degrader.</title>
        <authorList>
            <person name="Lykidis A."/>
            <person name="Perez-Pantoja D."/>
            <person name="Ledger T."/>
            <person name="Mavromatis K."/>
            <person name="Anderson I.J."/>
            <person name="Ivanova N.N."/>
            <person name="Hooper S.D."/>
            <person name="Lapidus A."/>
            <person name="Lucas S."/>
            <person name="Gonzalez B."/>
            <person name="Kyrpides N.C."/>
        </authorList>
    </citation>
    <scope>NUCLEOTIDE SEQUENCE [LARGE SCALE GENOMIC DNA]</scope>
    <source>
        <strain>JMP134 / LMG 1197</strain>
    </source>
</reference>
<organism>
    <name type="scientific">Cupriavidus pinatubonensis (strain JMP 134 / LMG 1197)</name>
    <name type="common">Cupriavidus necator (strain JMP 134)</name>
    <dbReference type="NCBI Taxonomy" id="264198"/>
    <lineage>
        <taxon>Bacteria</taxon>
        <taxon>Pseudomonadati</taxon>
        <taxon>Pseudomonadota</taxon>
        <taxon>Betaproteobacteria</taxon>
        <taxon>Burkholderiales</taxon>
        <taxon>Burkholderiaceae</taxon>
        <taxon>Cupriavidus</taxon>
    </lineage>
</organism>
<accession>Q476D8</accession>
<evidence type="ECO:0000255" key="1">
    <source>
        <dbReference type="HAMAP-Rule" id="MF_00004"/>
    </source>
</evidence>
<evidence type="ECO:0000305" key="2"/>
<name>APT_CUPPJ</name>
<feature type="chain" id="PRO_0000321389" description="Adenine phosphoribosyltransferase">
    <location>
        <begin position="1"/>
        <end position="190"/>
    </location>
</feature>
<gene>
    <name evidence="1" type="primary">apt</name>
    <name type="ordered locus">Reut_A0363</name>
</gene>
<dbReference type="EC" id="2.4.2.7" evidence="1"/>
<dbReference type="EMBL" id="CP000090">
    <property type="protein sequence ID" value="AAZ59745.1"/>
    <property type="status" value="ALT_INIT"/>
    <property type="molecule type" value="Genomic_DNA"/>
</dbReference>
<dbReference type="SMR" id="Q476D8"/>
<dbReference type="STRING" id="264198.Reut_A0363"/>
<dbReference type="KEGG" id="reu:Reut_A0363"/>
<dbReference type="eggNOG" id="COG0503">
    <property type="taxonomic scope" value="Bacteria"/>
</dbReference>
<dbReference type="HOGENOM" id="CLU_063339_3_0_4"/>
<dbReference type="OrthoDB" id="9803963at2"/>
<dbReference type="UniPathway" id="UPA00588">
    <property type="reaction ID" value="UER00646"/>
</dbReference>
<dbReference type="GO" id="GO:0005737">
    <property type="term" value="C:cytoplasm"/>
    <property type="evidence" value="ECO:0007669"/>
    <property type="project" value="UniProtKB-SubCell"/>
</dbReference>
<dbReference type="GO" id="GO:0002055">
    <property type="term" value="F:adenine binding"/>
    <property type="evidence" value="ECO:0007669"/>
    <property type="project" value="TreeGrafter"/>
</dbReference>
<dbReference type="GO" id="GO:0003999">
    <property type="term" value="F:adenine phosphoribosyltransferase activity"/>
    <property type="evidence" value="ECO:0007669"/>
    <property type="project" value="UniProtKB-UniRule"/>
</dbReference>
<dbReference type="GO" id="GO:0016208">
    <property type="term" value="F:AMP binding"/>
    <property type="evidence" value="ECO:0007669"/>
    <property type="project" value="TreeGrafter"/>
</dbReference>
<dbReference type="GO" id="GO:0006168">
    <property type="term" value="P:adenine salvage"/>
    <property type="evidence" value="ECO:0007669"/>
    <property type="project" value="InterPro"/>
</dbReference>
<dbReference type="GO" id="GO:0044209">
    <property type="term" value="P:AMP salvage"/>
    <property type="evidence" value="ECO:0007669"/>
    <property type="project" value="UniProtKB-UniRule"/>
</dbReference>
<dbReference type="GO" id="GO:0006166">
    <property type="term" value="P:purine ribonucleoside salvage"/>
    <property type="evidence" value="ECO:0007669"/>
    <property type="project" value="UniProtKB-KW"/>
</dbReference>
<dbReference type="CDD" id="cd06223">
    <property type="entry name" value="PRTases_typeI"/>
    <property type="match status" value="1"/>
</dbReference>
<dbReference type="FunFam" id="3.40.50.2020:FF:000021">
    <property type="entry name" value="Adenine phosphoribosyltransferase"/>
    <property type="match status" value="1"/>
</dbReference>
<dbReference type="Gene3D" id="3.40.50.2020">
    <property type="match status" value="1"/>
</dbReference>
<dbReference type="HAMAP" id="MF_00004">
    <property type="entry name" value="Aden_phosphoribosyltr"/>
    <property type="match status" value="1"/>
</dbReference>
<dbReference type="InterPro" id="IPR005764">
    <property type="entry name" value="Ade_phspho_trans"/>
</dbReference>
<dbReference type="InterPro" id="IPR000836">
    <property type="entry name" value="PRibTrfase_dom"/>
</dbReference>
<dbReference type="InterPro" id="IPR029057">
    <property type="entry name" value="PRTase-like"/>
</dbReference>
<dbReference type="InterPro" id="IPR050054">
    <property type="entry name" value="UPRTase/APRTase"/>
</dbReference>
<dbReference type="NCBIfam" id="TIGR01090">
    <property type="entry name" value="apt"/>
    <property type="match status" value="1"/>
</dbReference>
<dbReference type="NCBIfam" id="NF002634">
    <property type="entry name" value="PRK02304.1-3"/>
    <property type="match status" value="1"/>
</dbReference>
<dbReference type="NCBIfam" id="NF002636">
    <property type="entry name" value="PRK02304.1-5"/>
    <property type="match status" value="1"/>
</dbReference>
<dbReference type="PANTHER" id="PTHR32315">
    <property type="entry name" value="ADENINE PHOSPHORIBOSYLTRANSFERASE"/>
    <property type="match status" value="1"/>
</dbReference>
<dbReference type="PANTHER" id="PTHR32315:SF3">
    <property type="entry name" value="ADENINE PHOSPHORIBOSYLTRANSFERASE"/>
    <property type="match status" value="1"/>
</dbReference>
<dbReference type="Pfam" id="PF00156">
    <property type="entry name" value="Pribosyltran"/>
    <property type="match status" value="1"/>
</dbReference>
<dbReference type="SUPFAM" id="SSF53271">
    <property type="entry name" value="PRTase-like"/>
    <property type="match status" value="1"/>
</dbReference>
<dbReference type="PROSITE" id="PS00103">
    <property type="entry name" value="PUR_PYR_PR_TRANSFER"/>
    <property type="match status" value="1"/>
</dbReference>
<sequence length="190" mass="20745">MADSLIQSPDLGDVTGYLRDRIRTVPDWPMPGVQFRDITPLLQNPKTLRVLIDVFVHRYMDAQLDLVAGIDARGFILGAIVAYELNLGFVPIRKKGKLPFQTVAEEYELEYGSATVEIHADACKPGDRVLLIDDLIATGGTMMAGRKLLERLGATVVEGAAIVDLPELGGSKLLQNAGLPLFTVCRFDGH</sequence>
<keyword id="KW-0963">Cytoplasm</keyword>
<keyword id="KW-0328">Glycosyltransferase</keyword>
<keyword id="KW-0660">Purine salvage</keyword>
<keyword id="KW-0808">Transferase</keyword>
<protein>
    <recommendedName>
        <fullName evidence="1">Adenine phosphoribosyltransferase</fullName>
        <shortName evidence="1">APRT</shortName>
        <ecNumber evidence="1">2.4.2.7</ecNumber>
    </recommendedName>
</protein>
<comment type="function">
    <text evidence="1">Catalyzes a salvage reaction resulting in the formation of AMP, that is energically less costly than de novo synthesis.</text>
</comment>
<comment type="catalytic activity">
    <reaction evidence="1">
        <text>AMP + diphosphate = 5-phospho-alpha-D-ribose 1-diphosphate + adenine</text>
        <dbReference type="Rhea" id="RHEA:16609"/>
        <dbReference type="ChEBI" id="CHEBI:16708"/>
        <dbReference type="ChEBI" id="CHEBI:33019"/>
        <dbReference type="ChEBI" id="CHEBI:58017"/>
        <dbReference type="ChEBI" id="CHEBI:456215"/>
        <dbReference type="EC" id="2.4.2.7"/>
    </reaction>
</comment>
<comment type="pathway">
    <text evidence="1">Purine metabolism; AMP biosynthesis via salvage pathway; AMP from adenine: step 1/1.</text>
</comment>
<comment type="subunit">
    <text evidence="1">Homodimer.</text>
</comment>
<comment type="subcellular location">
    <subcellularLocation>
        <location evidence="1">Cytoplasm</location>
    </subcellularLocation>
</comment>
<comment type="similarity">
    <text evidence="1">Belongs to the purine/pyrimidine phosphoribosyltransferase family.</text>
</comment>
<comment type="sequence caution" evidence="2">
    <conflict type="erroneous initiation">
        <sequence resource="EMBL-CDS" id="AAZ59745"/>
    </conflict>
</comment>